<reference key="1">
    <citation type="submission" date="2006-05" db="EMBL/GenBank/DDBJ databases">
        <authorList>
            <consortium name="Genoscope"/>
        </authorList>
    </citation>
    <scope>NUCLEOTIDE SEQUENCE [LARGE SCALE GENOMIC DNA]</scope>
    <source>
        <strain>RCC307</strain>
    </source>
</reference>
<sequence>MHLSELSHPNELHGLSSSELEDVARQIREKHLKTVSTSGGHLGPGLGVVELTLALYQTLDLDHDRVVWDVGHQAYPHKLITGRFNEFHTLRKKDGVAGYLKRSESSFDHFGAGHASTSISAALGMAIARDRQGQNHKCVAVIGDGALTGGMALEAINHAGHLPKTRLLVVLNDNDMSISPPVGALSNHLNRMRLSPPMQFLTGSAEEAVRHLPFMQGQVPAELNRIKEGMKRLAVPKVGAVFEELGFTYMGPVDGHDIGALVRTFQEAHRSEGPVLVHVATTKGKGYPYAEADQVGYHAQSAFDLTTGKSFPAKKPKPPSYSKVFGQTLVKLCEQDSRIVGITAAMATGTGLDLLQKAVPDQYVDVGIAEQHAVTLAAGMACDGLKPVVAIYSTFLQRAYDQLIHDVGIQKLPVTFVLDRAGIVGADGPTHQGQYDISYLRCVPNFTVMAPKDEAELQRMLVTGLRHNGPIALRIPRGSGEGVPCLEDGWEPLEIGRGELLAEGDDLLIVAYGAMVAPAMATAGLLQEQGIRATVVNARFLRPLDEALLVPLAKRIGRVVTMEEGCLAGGFGAAVMEALHDRDVLVPMLRLGIPDQLVDHASPDESKQALGLTPPQMADRICERFGSAFGDRLQRQTLSV</sequence>
<gene>
    <name evidence="1" type="primary">dxs</name>
    <name type="ordered locus">SynRCC307_1390</name>
</gene>
<evidence type="ECO:0000255" key="1">
    <source>
        <dbReference type="HAMAP-Rule" id="MF_00315"/>
    </source>
</evidence>
<keyword id="KW-0414">Isoprene biosynthesis</keyword>
<keyword id="KW-0460">Magnesium</keyword>
<keyword id="KW-0479">Metal-binding</keyword>
<keyword id="KW-1185">Reference proteome</keyword>
<keyword id="KW-0784">Thiamine biosynthesis</keyword>
<keyword id="KW-0786">Thiamine pyrophosphate</keyword>
<keyword id="KW-0808">Transferase</keyword>
<accession>A5GTT4</accession>
<organism>
    <name type="scientific">Synechococcus sp. (strain RCC307)</name>
    <dbReference type="NCBI Taxonomy" id="316278"/>
    <lineage>
        <taxon>Bacteria</taxon>
        <taxon>Bacillati</taxon>
        <taxon>Cyanobacteriota</taxon>
        <taxon>Cyanophyceae</taxon>
        <taxon>Synechococcales</taxon>
        <taxon>Synechococcaceae</taxon>
        <taxon>Synechococcus</taxon>
    </lineage>
</organism>
<name>DXS_SYNR3</name>
<protein>
    <recommendedName>
        <fullName evidence="1">1-deoxy-D-xylulose-5-phosphate synthase</fullName>
        <ecNumber evidence="1">2.2.1.7</ecNumber>
    </recommendedName>
    <alternativeName>
        <fullName evidence="1">1-deoxyxylulose-5-phosphate synthase</fullName>
        <shortName evidence="1">DXP synthase</shortName>
        <shortName evidence="1">DXPS</shortName>
    </alternativeName>
</protein>
<dbReference type="EC" id="2.2.1.7" evidence="1"/>
<dbReference type="EMBL" id="CT978603">
    <property type="protein sequence ID" value="CAK28293.1"/>
    <property type="molecule type" value="Genomic_DNA"/>
</dbReference>
<dbReference type="SMR" id="A5GTT4"/>
<dbReference type="STRING" id="316278.SynRCC307_1390"/>
<dbReference type="KEGG" id="syr:SynRCC307_1390"/>
<dbReference type="eggNOG" id="COG1154">
    <property type="taxonomic scope" value="Bacteria"/>
</dbReference>
<dbReference type="HOGENOM" id="CLU_009227_1_4_3"/>
<dbReference type="OrthoDB" id="9803371at2"/>
<dbReference type="UniPathway" id="UPA00064">
    <property type="reaction ID" value="UER00091"/>
</dbReference>
<dbReference type="Proteomes" id="UP000001115">
    <property type="component" value="Chromosome"/>
</dbReference>
<dbReference type="GO" id="GO:0005829">
    <property type="term" value="C:cytosol"/>
    <property type="evidence" value="ECO:0007669"/>
    <property type="project" value="TreeGrafter"/>
</dbReference>
<dbReference type="GO" id="GO:0008661">
    <property type="term" value="F:1-deoxy-D-xylulose-5-phosphate synthase activity"/>
    <property type="evidence" value="ECO:0007669"/>
    <property type="project" value="UniProtKB-UniRule"/>
</dbReference>
<dbReference type="GO" id="GO:0000287">
    <property type="term" value="F:magnesium ion binding"/>
    <property type="evidence" value="ECO:0007669"/>
    <property type="project" value="UniProtKB-UniRule"/>
</dbReference>
<dbReference type="GO" id="GO:0030976">
    <property type="term" value="F:thiamine pyrophosphate binding"/>
    <property type="evidence" value="ECO:0007669"/>
    <property type="project" value="UniProtKB-UniRule"/>
</dbReference>
<dbReference type="GO" id="GO:0052865">
    <property type="term" value="P:1-deoxy-D-xylulose 5-phosphate biosynthetic process"/>
    <property type="evidence" value="ECO:0007669"/>
    <property type="project" value="UniProtKB-UniPathway"/>
</dbReference>
<dbReference type="GO" id="GO:0019288">
    <property type="term" value="P:isopentenyl diphosphate biosynthetic process, methylerythritol 4-phosphate pathway"/>
    <property type="evidence" value="ECO:0007669"/>
    <property type="project" value="TreeGrafter"/>
</dbReference>
<dbReference type="GO" id="GO:0016114">
    <property type="term" value="P:terpenoid biosynthetic process"/>
    <property type="evidence" value="ECO:0007669"/>
    <property type="project" value="UniProtKB-UniRule"/>
</dbReference>
<dbReference type="GO" id="GO:0009228">
    <property type="term" value="P:thiamine biosynthetic process"/>
    <property type="evidence" value="ECO:0007669"/>
    <property type="project" value="UniProtKB-UniRule"/>
</dbReference>
<dbReference type="CDD" id="cd02007">
    <property type="entry name" value="TPP_DXS"/>
    <property type="match status" value="1"/>
</dbReference>
<dbReference type="CDD" id="cd07033">
    <property type="entry name" value="TPP_PYR_DXS_TK_like"/>
    <property type="match status" value="1"/>
</dbReference>
<dbReference type="FunFam" id="3.40.50.920:FF:000002">
    <property type="entry name" value="1-deoxy-D-xylulose-5-phosphate synthase"/>
    <property type="match status" value="1"/>
</dbReference>
<dbReference type="FunFam" id="3.40.50.970:FF:000005">
    <property type="entry name" value="1-deoxy-D-xylulose-5-phosphate synthase"/>
    <property type="match status" value="1"/>
</dbReference>
<dbReference type="Gene3D" id="3.40.50.920">
    <property type="match status" value="1"/>
</dbReference>
<dbReference type="Gene3D" id="3.40.50.970">
    <property type="match status" value="2"/>
</dbReference>
<dbReference type="HAMAP" id="MF_00315">
    <property type="entry name" value="DXP_synth"/>
    <property type="match status" value="1"/>
</dbReference>
<dbReference type="InterPro" id="IPR005477">
    <property type="entry name" value="Dxylulose-5-P_synthase"/>
</dbReference>
<dbReference type="InterPro" id="IPR029061">
    <property type="entry name" value="THDP-binding"/>
</dbReference>
<dbReference type="InterPro" id="IPR009014">
    <property type="entry name" value="Transketo_C/PFOR_II"/>
</dbReference>
<dbReference type="InterPro" id="IPR005475">
    <property type="entry name" value="Transketolase-like_Pyr-bd"/>
</dbReference>
<dbReference type="InterPro" id="IPR020826">
    <property type="entry name" value="Transketolase_BS"/>
</dbReference>
<dbReference type="InterPro" id="IPR033248">
    <property type="entry name" value="Transketolase_C"/>
</dbReference>
<dbReference type="InterPro" id="IPR049557">
    <property type="entry name" value="Transketolase_CS"/>
</dbReference>
<dbReference type="NCBIfam" id="TIGR00204">
    <property type="entry name" value="dxs"/>
    <property type="match status" value="1"/>
</dbReference>
<dbReference type="NCBIfam" id="NF003933">
    <property type="entry name" value="PRK05444.2-2"/>
    <property type="match status" value="1"/>
</dbReference>
<dbReference type="PANTHER" id="PTHR43322">
    <property type="entry name" value="1-D-DEOXYXYLULOSE 5-PHOSPHATE SYNTHASE-RELATED"/>
    <property type="match status" value="1"/>
</dbReference>
<dbReference type="PANTHER" id="PTHR43322:SF5">
    <property type="entry name" value="1-DEOXY-D-XYLULOSE-5-PHOSPHATE SYNTHASE, CHLOROPLASTIC"/>
    <property type="match status" value="1"/>
</dbReference>
<dbReference type="Pfam" id="PF13292">
    <property type="entry name" value="DXP_synthase_N"/>
    <property type="match status" value="1"/>
</dbReference>
<dbReference type="Pfam" id="PF02779">
    <property type="entry name" value="Transket_pyr"/>
    <property type="match status" value="1"/>
</dbReference>
<dbReference type="Pfam" id="PF02780">
    <property type="entry name" value="Transketolase_C"/>
    <property type="match status" value="1"/>
</dbReference>
<dbReference type="SMART" id="SM00861">
    <property type="entry name" value="Transket_pyr"/>
    <property type="match status" value="1"/>
</dbReference>
<dbReference type="SUPFAM" id="SSF52518">
    <property type="entry name" value="Thiamin diphosphate-binding fold (THDP-binding)"/>
    <property type="match status" value="2"/>
</dbReference>
<dbReference type="SUPFAM" id="SSF52922">
    <property type="entry name" value="TK C-terminal domain-like"/>
    <property type="match status" value="1"/>
</dbReference>
<dbReference type="PROSITE" id="PS00801">
    <property type="entry name" value="TRANSKETOLASE_1"/>
    <property type="match status" value="1"/>
</dbReference>
<dbReference type="PROSITE" id="PS00802">
    <property type="entry name" value="TRANSKETOLASE_2"/>
    <property type="match status" value="1"/>
</dbReference>
<comment type="function">
    <text evidence="1">Catalyzes the acyloin condensation reaction between C atoms 2 and 3 of pyruvate and glyceraldehyde 3-phosphate to yield 1-deoxy-D-xylulose-5-phosphate (DXP).</text>
</comment>
<comment type="catalytic activity">
    <reaction evidence="1">
        <text>D-glyceraldehyde 3-phosphate + pyruvate + H(+) = 1-deoxy-D-xylulose 5-phosphate + CO2</text>
        <dbReference type="Rhea" id="RHEA:12605"/>
        <dbReference type="ChEBI" id="CHEBI:15361"/>
        <dbReference type="ChEBI" id="CHEBI:15378"/>
        <dbReference type="ChEBI" id="CHEBI:16526"/>
        <dbReference type="ChEBI" id="CHEBI:57792"/>
        <dbReference type="ChEBI" id="CHEBI:59776"/>
        <dbReference type="EC" id="2.2.1.7"/>
    </reaction>
</comment>
<comment type="cofactor">
    <cofactor evidence="1">
        <name>Mg(2+)</name>
        <dbReference type="ChEBI" id="CHEBI:18420"/>
    </cofactor>
    <text evidence="1">Binds 1 Mg(2+) ion per subunit.</text>
</comment>
<comment type="cofactor">
    <cofactor evidence="1">
        <name>thiamine diphosphate</name>
        <dbReference type="ChEBI" id="CHEBI:58937"/>
    </cofactor>
    <text evidence="1">Binds 1 thiamine pyrophosphate per subunit.</text>
</comment>
<comment type="pathway">
    <text evidence="1">Metabolic intermediate biosynthesis; 1-deoxy-D-xylulose 5-phosphate biosynthesis; 1-deoxy-D-xylulose 5-phosphate from D-glyceraldehyde 3-phosphate and pyruvate: step 1/1.</text>
</comment>
<comment type="subunit">
    <text evidence="1">Homodimer.</text>
</comment>
<comment type="similarity">
    <text evidence="1">Belongs to the transketolase family. DXPS subfamily.</text>
</comment>
<proteinExistence type="inferred from homology"/>
<feature type="chain" id="PRO_1000019085" description="1-deoxy-D-xylulose-5-phosphate synthase">
    <location>
        <begin position="1"/>
        <end position="640"/>
    </location>
</feature>
<feature type="binding site" evidence="1">
    <location>
        <position position="72"/>
    </location>
    <ligand>
        <name>thiamine diphosphate</name>
        <dbReference type="ChEBI" id="CHEBI:58937"/>
    </ligand>
</feature>
<feature type="binding site" evidence="1">
    <location>
        <begin position="113"/>
        <end position="115"/>
    </location>
    <ligand>
        <name>thiamine diphosphate</name>
        <dbReference type="ChEBI" id="CHEBI:58937"/>
    </ligand>
</feature>
<feature type="binding site" evidence="1">
    <location>
        <position position="144"/>
    </location>
    <ligand>
        <name>Mg(2+)</name>
        <dbReference type="ChEBI" id="CHEBI:18420"/>
    </ligand>
</feature>
<feature type="binding site" evidence="1">
    <location>
        <begin position="145"/>
        <end position="146"/>
    </location>
    <ligand>
        <name>thiamine diphosphate</name>
        <dbReference type="ChEBI" id="CHEBI:58937"/>
    </ligand>
</feature>
<feature type="binding site" evidence="1">
    <location>
        <position position="174"/>
    </location>
    <ligand>
        <name>Mg(2+)</name>
        <dbReference type="ChEBI" id="CHEBI:18420"/>
    </ligand>
</feature>
<feature type="binding site" evidence="1">
    <location>
        <position position="174"/>
    </location>
    <ligand>
        <name>thiamine diphosphate</name>
        <dbReference type="ChEBI" id="CHEBI:58937"/>
    </ligand>
</feature>
<feature type="binding site" evidence="1">
    <location>
        <position position="287"/>
    </location>
    <ligand>
        <name>thiamine diphosphate</name>
        <dbReference type="ChEBI" id="CHEBI:58937"/>
    </ligand>
</feature>
<feature type="binding site" evidence="1">
    <location>
        <position position="370"/>
    </location>
    <ligand>
        <name>thiamine diphosphate</name>
        <dbReference type="ChEBI" id="CHEBI:58937"/>
    </ligand>
</feature>